<name>I2BP1_DANRE</name>
<protein>
    <recommendedName>
        <fullName>Interferon regulatory factor 2-binding protein 1</fullName>
        <shortName>IRF-2-binding protein 1</shortName>
        <shortName>IRF-2BP1</shortName>
    </recommendedName>
</protein>
<accession>Q1LV17</accession>
<accession>A4IG01</accession>
<feature type="chain" id="PRO_0000328731" description="Interferon regulatory factor 2-binding protein 1">
    <location>
        <begin position="1"/>
        <end position="605"/>
    </location>
</feature>
<feature type="region of interest" description="Disordered" evidence="3">
    <location>
        <begin position="61"/>
        <end position="130"/>
    </location>
</feature>
<feature type="region of interest" description="Disordered" evidence="3">
    <location>
        <begin position="373"/>
        <end position="517"/>
    </location>
</feature>
<feature type="region of interest" description="Cys-rich">
    <location>
        <begin position="524"/>
        <end position="571"/>
    </location>
</feature>
<feature type="coiled-coil region" evidence="2">
    <location>
        <begin position="200"/>
        <end position="229"/>
    </location>
</feature>
<feature type="compositionally biased region" description="Basic and acidic residues" evidence="3">
    <location>
        <begin position="92"/>
        <end position="101"/>
    </location>
</feature>
<feature type="compositionally biased region" description="Basic and acidic residues" evidence="3">
    <location>
        <begin position="385"/>
        <end position="402"/>
    </location>
</feature>
<feature type="compositionally biased region" description="Polar residues" evidence="3">
    <location>
        <begin position="460"/>
        <end position="475"/>
    </location>
</feature>
<feature type="compositionally biased region" description="Polar residues" evidence="3">
    <location>
        <begin position="492"/>
        <end position="506"/>
    </location>
</feature>
<feature type="sequence conflict" description="In Ref. 2; AAI34861." evidence="4" ref="2">
    <original>M</original>
    <variation>I</variation>
    <location>
        <position position="197"/>
    </location>
</feature>
<proteinExistence type="evidence at transcript level"/>
<reference key="1">
    <citation type="journal article" date="2013" name="Nature">
        <title>The zebrafish reference genome sequence and its relationship to the human genome.</title>
        <authorList>
            <person name="Howe K."/>
            <person name="Clark M.D."/>
            <person name="Torroja C.F."/>
            <person name="Torrance J."/>
            <person name="Berthelot C."/>
            <person name="Muffato M."/>
            <person name="Collins J.E."/>
            <person name="Humphray S."/>
            <person name="McLaren K."/>
            <person name="Matthews L."/>
            <person name="McLaren S."/>
            <person name="Sealy I."/>
            <person name="Caccamo M."/>
            <person name="Churcher C."/>
            <person name="Scott C."/>
            <person name="Barrett J.C."/>
            <person name="Koch R."/>
            <person name="Rauch G.J."/>
            <person name="White S."/>
            <person name="Chow W."/>
            <person name="Kilian B."/>
            <person name="Quintais L.T."/>
            <person name="Guerra-Assuncao J.A."/>
            <person name="Zhou Y."/>
            <person name="Gu Y."/>
            <person name="Yen J."/>
            <person name="Vogel J.H."/>
            <person name="Eyre T."/>
            <person name="Redmond S."/>
            <person name="Banerjee R."/>
            <person name="Chi J."/>
            <person name="Fu B."/>
            <person name="Langley E."/>
            <person name="Maguire S.F."/>
            <person name="Laird G.K."/>
            <person name="Lloyd D."/>
            <person name="Kenyon E."/>
            <person name="Donaldson S."/>
            <person name="Sehra H."/>
            <person name="Almeida-King J."/>
            <person name="Loveland J."/>
            <person name="Trevanion S."/>
            <person name="Jones M."/>
            <person name="Quail M."/>
            <person name="Willey D."/>
            <person name="Hunt A."/>
            <person name="Burton J."/>
            <person name="Sims S."/>
            <person name="McLay K."/>
            <person name="Plumb B."/>
            <person name="Davis J."/>
            <person name="Clee C."/>
            <person name="Oliver K."/>
            <person name="Clark R."/>
            <person name="Riddle C."/>
            <person name="Elliot D."/>
            <person name="Threadgold G."/>
            <person name="Harden G."/>
            <person name="Ware D."/>
            <person name="Begum S."/>
            <person name="Mortimore B."/>
            <person name="Kerry G."/>
            <person name="Heath P."/>
            <person name="Phillimore B."/>
            <person name="Tracey A."/>
            <person name="Corby N."/>
            <person name="Dunn M."/>
            <person name="Johnson C."/>
            <person name="Wood J."/>
            <person name="Clark S."/>
            <person name="Pelan S."/>
            <person name="Griffiths G."/>
            <person name="Smith M."/>
            <person name="Glithero R."/>
            <person name="Howden P."/>
            <person name="Barker N."/>
            <person name="Lloyd C."/>
            <person name="Stevens C."/>
            <person name="Harley J."/>
            <person name="Holt K."/>
            <person name="Panagiotidis G."/>
            <person name="Lovell J."/>
            <person name="Beasley H."/>
            <person name="Henderson C."/>
            <person name="Gordon D."/>
            <person name="Auger K."/>
            <person name="Wright D."/>
            <person name="Collins J."/>
            <person name="Raisen C."/>
            <person name="Dyer L."/>
            <person name="Leung K."/>
            <person name="Robertson L."/>
            <person name="Ambridge K."/>
            <person name="Leongamornlert D."/>
            <person name="McGuire S."/>
            <person name="Gilderthorp R."/>
            <person name="Griffiths C."/>
            <person name="Manthravadi D."/>
            <person name="Nichol S."/>
            <person name="Barker G."/>
            <person name="Whitehead S."/>
            <person name="Kay M."/>
            <person name="Brown J."/>
            <person name="Murnane C."/>
            <person name="Gray E."/>
            <person name="Humphries M."/>
            <person name="Sycamore N."/>
            <person name="Barker D."/>
            <person name="Saunders D."/>
            <person name="Wallis J."/>
            <person name="Babbage A."/>
            <person name="Hammond S."/>
            <person name="Mashreghi-Mohammadi M."/>
            <person name="Barr L."/>
            <person name="Martin S."/>
            <person name="Wray P."/>
            <person name="Ellington A."/>
            <person name="Matthews N."/>
            <person name="Ellwood M."/>
            <person name="Woodmansey R."/>
            <person name="Clark G."/>
            <person name="Cooper J."/>
            <person name="Tromans A."/>
            <person name="Grafham D."/>
            <person name="Skuce C."/>
            <person name="Pandian R."/>
            <person name="Andrews R."/>
            <person name="Harrison E."/>
            <person name="Kimberley A."/>
            <person name="Garnett J."/>
            <person name="Fosker N."/>
            <person name="Hall R."/>
            <person name="Garner P."/>
            <person name="Kelly D."/>
            <person name="Bird C."/>
            <person name="Palmer S."/>
            <person name="Gehring I."/>
            <person name="Berger A."/>
            <person name="Dooley C.M."/>
            <person name="Ersan-Urun Z."/>
            <person name="Eser C."/>
            <person name="Geiger H."/>
            <person name="Geisler M."/>
            <person name="Karotki L."/>
            <person name="Kirn A."/>
            <person name="Konantz J."/>
            <person name="Konantz M."/>
            <person name="Oberlander M."/>
            <person name="Rudolph-Geiger S."/>
            <person name="Teucke M."/>
            <person name="Lanz C."/>
            <person name="Raddatz G."/>
            <person name="Osoegawa K."/>
            <person name="Zhu B."/>
            <person name="Rapp A."/>
            <person name="Widaa S."/>
            <person name="Langford C."/>
            <person name="Yang F."/>
            <person name="Schuster S.C."/>
            <person name="Carter N.P."/>
            <person name="Harrow J."/>
            <person name="Ning Z."/>
            <person name="Herrero J."/>
            <person name="Searle S.M."/>
            <person name="Enright A."/>
            <person name="Geisler R."/>
            <person name="Plasterk R.H."/>
            <person name="Lee C."/>
            <person name="Westerfield M."/>
            <person name="de Jong P.J."/>
            <person name="Zon L.I."/>
            <person name="Postlethwait J.H."/>
            <person name="Nusslein-Volhard C."/>
            <person name="Hubbard T.J."/>
            <person name="Roest Crollius H."/>
            <person name="Rogers J."/>
            <person name="Stemple D.L."/>
        </authorList>
    </citation>
    <scope>NUCLEOTIDE SEQUENCE [LARGE SCALE GENOMIC DNA]</scope>
    <source>
        <strain>Tuebingen</strain>
    </source>
</reference>
<reference key="2">
    <citation type="submission" date="2007-03" db="EMBL/GenBank/DDBJ databases">
        <authorList>
            <consortium name="NIH - Zebrafish Gene Collection (ZGC) project"/>
        </authorList>
    </citation>
    <scope>NUCLEOTIDE SEQUENCE [LARGE SCALE MRNA]</scope>
    <source>
        <tissue>Ovary</tissue>
    </source>
</reference>
<dbReference type="EMBL" id="BX908751">
    <property type="protein sequence ID" value="CAK05477.1"/>
    <property type="molecule type" value="Genomic_DNA"/>
</dbReference>
<dbReference type="EMBL" id="BC134860">
    <property type="protein sequence ID" value="AAI34861.1"/>
    <property type="molecule type" value="mRNA"/>
</dbReference>
<dbReference type="RefSeq" id="NP_001037819.2">
    <property type="nucleotide sequence ID" value="NM_001044354.2"/>
</dbReference>
<dbReference type="SMR" id="Q1LV17"/>
<dbReference type="FunCoup" id="Q1LV17">
    <property type="interactions" value="540"/>
</dbReference>
<dbReference type="STRING" id="7955.ENSDARP00000026919"/>
<dbReference type="PaxDb" id="7955-ENSDARP00000026919"/>
<dbReference type="Ensembl" id="ENSDART00000018163">
    <property type="protein sequence ID" value="ENSDARP00000026919"/>
    <property type="gene ID" value="ENSDARG00000005468"/>
</dbReference>
<dbReference type="GeneID" id="556852"/>
<dbReference type="KEGG" id="dre:556852"/>
<dbReference type="AGR" id="ZFIN:ZDB-GENE-050420-389"/>
<dbReference type="CTD" id="26145"/>
<dbReference type="ZFIN" id="ZDB-GENE-050420-389">
    <property type="gene designation" value="irf2bp1"/>
</dbReference>
<dbReference type="eggNOG" id="KOG3579">
    <property type="taxonomic scope" value="Eukaryota"/>
</dbReference>
<dbReference type="HOGENOM" id="CLU_019307_2_0_1"/>
<dbReference type="InParanoid" id="Q1LV17"/>
<dbReference type="OMA" id="MFQDCLK"/>
<dbReference type="OrthoDB" id="10065080at2759"/>
<dbReference type="PhylomeDB" id="Q1LV17"/>
<dbReference type="TreeFam" id="TF317075"/>
<dbReference type="PRO" id="PR:Q1LV17"/>
<dbReference type="Proteomes" id="UP000000437">
    <property type="component" value="Chromosome 18"/>
</dbReference>
<dbReference type="Bgee" id="ENSDARG00000005468">
    <property type="expression patterns" value="Expressed in heart and 27 other cell types or tissues"/>
</dbReference>
<dbReference type="GO" id="GO:0005634">
    <property type="term" value="C:nucleus"/>
    <property type="evidence" value="ECO:0000318"/>
    <property type="project" value="GO_Central"/>
</dbReference>
<dbReference type="GO" id="GO:0003714">
    <property type="term" value="F:transcription corepressor activity"/>
    <property type="evidence" value="ECO:0000318"/>
    <property type="project" value="GO_Central"/>
</dbReference>
<dbReference type="GO" id="GO:0006357">
    <property type="term" value="P:regulation of transcription by RNA polymerase II"/>
    <property type="evidence" value="ECO:0000318"/>
    <property type="project" value="GO_Central"/>
</dbReference>
<dbReference type="FunFam" id="1.10.10.1580:FF:000001">
    <property type="entry name" value="interferon regulatory factor 2-binding protein 2"/>
    <property type="match status" value="1"/>
</dbReference>
<dbReference type="Gene3D" id="1.10.10.1580">
    <property type="entry name" value="Interferon regulatory factor 2-binding protein"/>
    <property type="match status" value="1"/>
</dbReference>
<dbReference type="InterPro" id="IPR044882">
    <property type="entry name" value="I2BP1/2_C3HC4-RING_sf"/>
</dbReference>
<dbReference type="InterPro" id="IPR022750">
    <property type="entry name" value="Interferon_reg_fac2-bd1_2_Znf"/>
</dbReference>
<dbReference type="PANTHER" id="PTHR10816:SF17">
    <property type="entry name" value="INTERFERON REGULATORY FACTOR 2-BINDING PROTEIN 1"/>
    <property type="match status" value="1"/>
</dbReference>
<dbReference type="PANTHER" id="PTHR10816">
    <property type="entry name" value="MYELIN TRANSCRIPTION FACTOR 1-RELATED"/>
    <property type="match status" value="1"/>
</dbReference>
<dbReference type="Pfam" id="PF11261">
    <property type="entry name" value="IRF-2BP1_2"/>
    <property type="match status" value="1"/>
</dbReference>
<dbReference type="Pfam" id="PF25457">
    <property type="entry name" value="IRF-2BP1_2_M"/>
    <property type="match status" value="1"/>
</dbReference>
<dbReference type="Pfam" id="PF25454">
    <property type="entry name" value="zf-C3HC4_IRF-2BP1_2"/>
    <property type="match status" value="1"/>
</dbReference>
<dbReference type="SUPFAM" id="SSF57850">
    <property type="entry name" value="RING/U-box"/>
    <property type="match status" value="1"/>
</dbReference>
<comment type="function">
    <text evidence="1">Acts as a transcriptional repressor.</text>
</comment>
<comment type="subcellular location">
    <subcellularLocation>
        <location evidence="1">Nucleus</location>
    </subcellularLocation>
</comment>
<comment type="similarity">
    <text evidence="4">Belongs to the IRF2BP family.</text>
</comment>
<gene>
    <name type="primary">irf2bp1</name>
    <name type="ORF">si:dkey-223n17.3</name>
</gene>
<organism>
    <name type="scientific">Danio rerio</name>
    <name type="common">Zebrafish</name>
    <name type="synonym">Brachydanio rerio</name>
    <dbReference type="NCBI Taxonomy" id="7955"/>
    <lineage>
        <taxon>Eukaryota</taxon>
        <taxon>Metazoa</taxon>
        <taxon>Chordata</taxon>
        <taxon>Craniata</taxon>
        <taxon>Vertebrata</taxon>
        <taxon>Euteleostomi</taxon>
        <taxon>Actinopterygii</taxon>
        <taxon>Neopterygii</taxon>
        <taxon>Teleostei</taxon>
        <taxon>Ostariophysi</taxon>
        <taxon>Cypriniformes</taxon>
        <taxon>Danionidae</taxon>
        <taxon>Danioninae</taxon>
        <taxon>Danio</taxon>
    </lineage>
</organism>
<evidence type="ECO:0000250" key="1"/>
<evidence type="ECO:0000255" key="2"/>
<evidence type="ECO:0000256" key="3">
    <source>
        <dbReference type="SAM" id="MobiDB-lite"/>
    </source>
</evidence>
<evidence type="ECO:0000305" key="4"/>
<keyword id="KW-0175">Coiled coil</keyword>
<keyword id="KW-0539">Nucleus</keyword>
<keyword id="KW-1185">Reference proteome</keyword>
<keyword id="KW-0678">Repressor</keyword>
<keyword id="KW-0804">Transcription</keyword>
<keyword id="KW-0805">Transcription regulation</keyword>
<sequence length="605" mass="64906">MSSSSQASSRRQWCYLCDLPKMPWAMIWDFSEAVCRGCVNYEGADRIELLIDTARQLKRTHVMQDGRSPGPQPGGKHGPAGKEGPMEAGRPPSERYERGRGEYVSARLPNGLPRLEDGGPPEVSRQSPTARRTLVGAVPPNLMAQGLVGAPHGLLTAMPLNPRAGSAALTIPAPMLNEISKRQALSMGLSVGVPSFMAPEFEKEFKEKQRNAEALAELSESVRNRADDWAGRPKPMRDALHTLSGCTPFNVRFKKDHGLVGRVFAFDAKLMVEFELKIFIEYPCGSGNVFPSILALVKHMFHDSQKDTGKVINSGYKYVEYEKRHGTGDWRLLSELLSDAVRAFKEMPAPDALPQPYLDASCSMLPTALCHIGRPTQPRVRRRKASPDPDGAERMSSEELRQHWPLSAYPGIPGHMPATSLASAGQAPEGHGSDPSPITALMSVADNVGTASSKDGPGSSGHSANAGRQNSTSPSPGGGQRRLASRNGEPSAGSSTGGPATVTDQSAVMGGEGSAGGGGAPLCCTICQERLEDTHFVQCPSVAGHKFCFPCTRDFIRRQGPGSEVYCPSGEKCPLVGSNVPWAFMQGEISTILAGDVKVKKERDP</sequence>